<comment type="function">
    <text evidence="1">Catalyzes the ATP- as well as the pyrophosphate-dependent phosphorylation of a specific serine residue in HPr, a phosphocarrier protein of the phosphoenolpyruvate-dependent sugar phosphotransferase system (PTS). HprK/P also catalyzes the pyrophosphate-producing, inorganic phosphate-dependent dephosphorylation (phosphorolysis) of seryl-phosphorylated HPr (P-Ser-HPr). The two antagonistic activities of HprK/P are regulated by several intracellular metabolites, which change their concentration in response to the absence or presence of rapidly metabolisable carbon sources (glucose, fructose, etc.) in the growth medium. Therefore, by controlling the phosphorylation state of HPr, HPrK/P is a sensor enzyme that plays a major role in the regulation of carbon metabolism and sugar transport: it mediates carbon catabolite repression (CCR), and regulates PTS-catalyzed carbohydrate uptake and inducer exclusion.</text>
</comment>
<comment type="catalytic activity">
    <reaction evidence="1">
        <text>[HPr protein]-L-serine + ATP = [HPr protein]-O-phospho-L-serine + ADP + H(+)</text>
        <dbReference type="Rhea" id="RHEA:46600"/>
        <dbReference type="Rhea" id="RHEA-COMP:11602"/>
        <dbReference type="Rhea" id="RHEA-COMP:11603"/>
        <dbReference type="ChEBI" id="CHEBI:15378"/>
        <dbReference type="ChEBI" id="CHEBI:29999"/>
        <dbReference type="ChEBI" id="CHEBI:30616"/>
        <dbReference type="ChEBI" id="CHEBI:83421"/>
        <dbReference type="ChEBI" id="CHEBI:456216"/>
    </reaction>
</comment>
<comment type="catalytic activity">
    <reaction evidence="1">
        <text>[HPr protein]-O-phospho-L-serine + phosphate + H(+) = [HPr protein]-L-serine + diphosphate</text>
        <dbReference type="Rhea" id="RHEA:46604"/>
        <dbReference type="Rhea" id="RHEA-COMP:11602"/>
        <dbReference type="Rhea" id="RHEA-COMP:11603"/>
        <dbReference type="ChEBI" id="CHEBI:15378"/>
        <dbReference type="ChEBI" id="CHEBI:29999"/>
        <dbReference type="ChEBI" id="CHEBI:33019"/>
        <dbReference type="ChEBI" id="CHEBI:43474"/>
        <dbReference type="ChEBI" id="CHEBI:83421"/>
    </reaction>
</comment>
<comment type="cofactor">
    <cofactor evidence="1">
        <name>Mg(2+)</name>
        <dbReference type="ChEBI" id="CHEBI:18420"/>
    </cofactor>
</comment>
<comment type="subunit">
    <text evidence="1">Homohexamer.</text>
</comment>
<comment type="domain">
    <text evidence="1">The Walker A ATP-binding motif also binds Pi and PPi.</text>
</comment>
<comment type="miscellaneous">
    <text evidence="1">Both phosphorylation and phosphorolysis are carried out by the same active site and suggest a common mechanism for both reactions.</text>
</comment>
<comment type="similarity">
    <text evidence="1">Belongs to the HPrK/P family.</text>
</comment>
<accession>C1KYQ0</accession>
<feature type="chain" id="PRO_1000214110" description="HPr kinase/phosphorylase">
    <location>
        <begin position="1"/>
        <end position="312"/>
    </location>
</feature>
<feature type="region of interest" description="Important for the catalytic mechanism of both phosphorylation and dephosphorylation" evidence="1">
    <location>
        <begin position="202"/>
        <end position="211"/>
    </location>
</feature>
<feature type="region of interest" description="Important for the catalytic mechanism of dephosphorylation" evidence="1">
    <location>
        <begin position="265"/>
        <end position="270"/>
    </location>
</feature>
<feature type="active site" evidence="1">
    <location>
        <position position="139"/>
    </location>
</feature>
<feature type="active site" evidence="1">
    <location>
        <position position="160"/>
    </location>
</feature>
<feature type="active site" description="Proton acceptor; for phosphorylation activity. Proton donor; for dephosphorylation activity" evidence="1">
    <location>
        <position position="178"/>
    </location>
</feature>
<feature type="active site" evidence="1">
    <location>
        <position position="244"/>
    </location>
</feature>
<feature type="binding site" evidence="1">
    <location>
        <begin position="154"/>
        <end position="161"/>
    </location>
    <ligand>
        <name>ATP</name>
        <dbReference type="ChEBI" id="CHEBI:30616"/>
    </ligand>
</feature>
<feature type="binding site" evidence="1">
    <location>
        <position position="161"/>
    </location>
    <ligand>
        <name>Mg(2+)</name>
        <dbReference type="ChEBI" id="CHEBI:18420"/>
    </ligand>
</feature>
<feature type="binding site" evidence="1">
    <location>
        <position position="203"/>
    </location>
    <ligand>
        <name>Mg(2+)</name>
        <dbReference type="ChEBI" id="CHEBI:18420"/>
    </ligand>
</feature>
<evidence type="ECO:0000255" key="1">
    <source>
        <dbReference type="HAMAP-Rule" id="MF_01249"/>
    </source>
</evidence>
<dbReference type="EC" id="2.7.11.-" evidence="1"/>
<dbReference type="EC" id="2.7.4.-" evidence="1"/>
<dbReference type="EMBL" id="FM242711">
    <property type="protein sequence ID" value="CAS06207.1"/>
    <property type="molecule type" value="Genomic_DNA"/>
</dbReference>
<dbReference type="RefSeq" id="WP_003722615.1">
    <property type="nucleotide sequence ID" value="NC_012488.1"/>
</dbReference>
<dbReference type="SMR" id="C1KYQ0"/>
<dbReference type="KEGG" id="lmc:Lm4b_02452"/>
<dbReference type="HOGENOM" id="CLU_052030_0_1_9"/>
<dbReference type="GO" id="GO:0005524">
    <property type="term" value="F:ATP binding"/>
    <property type="evidence" value="ECO:0007669"/>
    <property type="project" value="UniProtKB-UniRule"/>
</dbReference>
<dbReference type="GO" id="GO:0000287">
    <property type="term" value="F:magnesium ion binding"/>
    <property type="evidence" value="ECO:0007669"/>
    <property type="project" value="UniProtKB-UniRule"/>
</dbReference>
<dbReference type="GO" id="GO:0000155">
    <property type="term" value="F:phosphorelay sensor kinase activity"/>
    <property type="evidence" value="ECO:0007669"/>
    <property type="project" value="InterPro"/>
</dbReference>
<dbReference type="GO" id="GO:0004674">
    <property type="term" value="F:protein serine/threonine kinase activity"/>
    <property type="evidence" value="ECO:0007669"/>
    <property type="project" value="UniProtKB-KW"/>
</dbReference>
<dbReference type="GO" id="GO:0004712">
    <property type="term" value="F:protein serine/threonine/tyrosine kinase activity"/>
    <property type="evidence" value="ECO:0007669"/>
    <property type="project" value="UniProtKB-UniRule"/>
</dbReference>
<dbReference type="GO" id="GO:0006109">
    <property type="term" value="P:regulation of carbohydrate metabolic process"/>
    <property type="evidence" value="ECO:0007669"/>
    <property type="project" value="UniProtKB-UniRule"/>
</dbReference>
<dbReference type="CDD" id="cd01918">
    <property type="entry name" value="HprK_C"/>
    <property type="match status" value="1"/>
</dbReference>
<dbReference type="FunFam" id="3.40.1390.20:FF:000002">
    <property type="entry name" value="HPr kinase/phosphorylase"/>
    <property type="match status" value="1"/>
</dbReference>
<dbReference type="FunFam" id="3.40.50.300:FF:000174">
    <property type="entry name" value="HPr kinase/phosphorylase"/>
    <property type="match status" value="1"/>
</dbReference>
<dbReference type="Gene3D" id="3.40.1390.20">
    <property type="entry name" value="HprK N-terminal domain-like"/>
    <property type="match status" value="1"/>
</dbReference>
<dbReference type="Gene3D" id="3.40.50.300">
    <property type="entry name" value="P-loop containing nucleotide triphosphate hydrolases"/>
    <property type="match status" value="1"/>
</dbReference>
<dbReference type="HAMAP" id="MF_01249">
    <property type="entry name" value="HPr_kinase"/>
    <property type="match status" value="1"/>
</dbReference>
<dbReference type="InterPro" id="IPR003755">
    <property type="entry name" value="HPr(Ser)_kin/Pase"/>
</dbReference>
<dbReference type="InterPro" id="IPR011104">
    <property type="entry name" value="Hpr_kin/Pase_C"/>
</dbReference>
<dbReference type="InterPro" id="IPR011126">
    <property type="entry name" value="Hpr_kin/Pase_Hpr_N"/>
</dbReference>
<dbReference type="InterPro" id="IPR027417">
    <property type="entry name" value="P-loop_NTPase"/>
</dbReference>
<dbReference type="InterPro" id="IPR028979">
    <property type="entry name" value="Ser_kin/Pase_Hpr-like_N_sf"/>
</dbReference>
<dbReference type="NCBIfam" id="TIGR00679">
    <property type="entry name" value="hpr-ser"/>
    <property type="match status" value="1"/>
</dbReference>
<dbReference type="PANTHER" id="PTHR30305:SF1">
    <property type="entry name" value="HPR KINASE_PHOSPHORYLASE"/>
    <property type="match status" value="1"/>
</dbReference>
<dbReference type="PANTHER" id="PTHR30305">
    <property type="entry name" value="PROTEIN YJDM-RELATED"/>
    <property type="match status" value="1"/>
</dbReference>
<dbReference type="Pfam" id="PF07475">
    <property type="entry name" value="Hpr_kinase_C"/>
    <property type="match status" value="1"/>
</dbReference>
<dbReference type="Pfam" id="PF02603">
    <property type="entry name" value="Hpr_kinase_N"/>
    <property type="match status" value="1"/>
</dbReference>
<dbReference type="SUPFAM" id="SSF75138">
    <property type="entry name" value="HprK N-terminal domain-like"/>
    <property type="match status" value="1"/>
</dbReference>
<dbReference type="SUPFAM" id="SSF53795">
    <property type="entry name" value="PEP carboxykinase-like"/>
    <property type="match status" value="1"/>
</dbReference>
<name>HPRK_LISMC</name>
<proteinExistence type="inferred from homology"/>
<reference key="1">
    <citation type="journal article" date="2012" name="BMC Genomics">
        <title>Comparative genomics and transcriptomics of lineages I, II, and III strains of Listeria monocytogenes.</title>
        <authorList>
            <person name="Hain T."/>
            <person name="Ghai R."/>
            <person name="Billion A."/>
            <person name="Kuenne C.T."/>
            <person name="Steinweg C."/>
            <person name="Izar B."/>
            <person name="Mohamed W."/>
            <person name="Mraheil M."/>
            <person name="Domann E."/>
            <person name="Schaffrath S."/>
            <person name="Karst U."/>
            <person name="Goesmann A."/>
            <person name="Oehm S."/>
            <person name="Puhler A."/>
            <person name="Merkl R."/>
            <person name="Vorwerk S."/>
            <person name="Glaser P."/>
            <person name="Garrido P."/>
            <person name="Rusniok C."/>
            <person name="Buchrieser C."/>
            <person name="Goebel W."/>
            <person name="Chakraborty T."/>
        </authorList>
    </citation>
    <scope>NUCLEOTIDE SEQUENCE [LARGE SCALE GENOMIC DNA]</scope>
    <source>
        <strain>CLIP80459</strain>
    </source>
</reference>
<sequence length="312" mass="34950">MTKSVTVKDLKERLNLELICSETGLERPISTSDLSRPGLELTGFFSYYPEDRVQLFGMTEISFSEGMEPEERLKRYKQMCTKRTPAFVISRNLEVPKELVAAAKEADIPVLRSRLKTTRLSVYITNYLESRLAPVISMHGVLVDIYGLGVLITGSSGVGKSETALELVKRGHRLVADDNVEIRQEDEMTLIGSSPAIIEHLLEIRGLGIINVMTLFGAGAVRSSKKITIVVHLENWDPDKHYDRVGLDQEKTKIFDMDIPKITVPVRPGRNLSVIIEVAAMNFRLKNMGYNAAEQFTQDLNNLIGHNSSMND</sequence>
<gene>
    <name evidence="1" type="primary">hprK</name>
    <name type="ordered locus">Lm4b_02452</name>
</gene>
<organism>
    <name type="scientific">Listeria monocytogenes serotype 4b (strain CLIP80459)</name>
    <dbReference type="NCBI Taxonomy" id="568819"/>
    <lineage>
        <taxon>Bacteria</taxon>
        <taxon>Bacillati</taxon>
        <taxon>Bacillota</taxon>
        <taxon>Bacilli</taxon>
        <taxon>Bacillales</taxon>
        <taxon>Listeriaceae</taxon>
        <taxon>Listeria</taxon>
    </lineage>
</organism>
<protein>
    <recommendedName>
        <fullName evidence="1">HPr kinase/phosphorylase</fullName>
        <shortName evidence="1">HPrK/P</shortName>
        <ecNumber evidence="1">2.7.11.-</ecNumber>
        <ecNumber evidence="1">2.7.4.-</ecNumber>
    </recommendedName>
    <alternativeName>
        <fullName evidence="1">HPr(Ser) kinase/phosphorylase</fullName>
    </alternativeName>
</protein>
<keyword id="KW-0067">ATP-binding</keyword>
<keyword id="KW-0119">Carbohydrate metabolism</keyword>
<keyword id="KW-0418">Kinase</keyword>
<keyword id="KW-0460">Magnesium</keyword>
<keyword id="KW-0479">Metal-binding</keyword>
<keyword id="KW-0511">Multifunctional enzyme</keyword>
<keyword id="KW-0547">Nucleotide-binding</keyword>
<keyword id="KW-0723">Serine/threonine-protein kinase</keyword>
<keyword id="KW-0808">Transferase</keyword>